<proteinExistence type="inferred from homology"/>
<comment type="function">
    <text evidence="1">Represses a number of genes involved in the response to DNA damage (SOS response), including recA and lexA. In the presence of single-stranded DNA, RecA interacts with LexA causing an autocatalytic cleavage which disrupts the DNA-binding part of LexA, leading to derepression of the SOS regulon and eventually DNA repair.</text>
</comment>
<comment type="catalytic activity">
    <reaction evidence="1">
        <text>Hydrolysis of Ala-|-Gly bond in repressor LexA.</text>
        <dbReference type="EC" id="3.4.21.88"/>
    </reaction>
</comment>
<comment type="subunit">
    <text evidence="1">Homodimer.</text>
</comment>
<comment type="similarity">
    <text evidence="1">Belongs to the peptidase S24 family.</text>
</comment>
<evidence type="ECO:0000255" key="1">
    <source>
        <dbReference type="HAMAP-Rule" id="MF_00015"/>
    </source>
</evidence>
<feature type="chain" id="PRO_0000170020" description="LexA repressor">
    <location>
        <begin position="1"/>
        <end position="240"/>
    </location>
</feature>
<feature type="DNA-binding region" description="H-T-H motif" evidence="1">
    <location>
        <begin position="26"/>
        <end position="46"/>
    </location>
</feature>
<feature type="active site" description="For autocatalytic cleavage activity" evidence="1">
    <location>
        <position position="161"/>
    </location>
</feature>
<feature type="active site" description="For autocatalytic cleavage activity" evidence="1">
    <location>
        <position position="199"/>
    </location>
</feature>
<feature type="site" description="Cleavage; by autolysis" evidence="1">
    <location>
        <begin position="126"/>
        <end position="127"/>
    </location>
</feature>
<dbReference type="EC" id="3.4.21.88" evidence="1"/>
<dbReference type="EMBL" id="AE014291">
    <property type="protein sequence ID" value="AAN30064.1"/>
    <property type="molecule type" value="Genomic_DNA"/>
</dbReference>
<dbReference type="EMBL" id="CP002997">
    <property type="protein sequence ID" value="AEM18482.1"/>
    <property type="molecule type" value="Genomic_DNA"/>
</dbReference>
<dbReference type="RefSeq" id="WP_002964272.1">
    <property type="nucleotide sequence ID" value="NZ_KN046804.1"/>
</dbReference>
<dbReference type="SMR" id="Q8G0F1"/>
<dbReference type="MEROPS" id="S24.001"/>
<dbReference type="GeneID" id="97533604"/>
<dbReference type="KEGG" id="bms:BR1144"/>
<dbReference type="KEGG" id="bsi:BS1330_I1140"/>
<dbReference type="PATRIC" id="fig|204722.22.peg.702"/>
<dbReference type="HOGENOM" id="CLU_066192_45_2_5"/>
<dbReference type="PhylomeDB" id="Q8G0F1"/>
<dbReference type="Proteomes" id="UP000007104">
    <property type="component" value="Chromosome I"/>
</dbReference>
<dbReference type="GO" id="GO:0003677">
    <property type="term" value="F:DNA binding"/>
    <property type="evidence" value="ECO:0007669"/>
    <property type="project" value="UniProtKB-UniRule"/>
</dbReference>
<dbReference type="GO" id="GO:0004252">
    <property type="term" value="F:serine-type endopeptidase activity"/>
    <property type="evidence" value="ECO:0007669"/>
    <property type="project" value="UniProtKB-UniRule"/>
</dbReference>
<dbReference type="GO" id="GO:0006281">
    <property type="term" value="P:DNA repair"/>
    <property type="evidence" value="ECO:0007669"/>
    <property type="project" value="UniProtKB-UniRule"/>
</dbReference>
<dbReference type="GO" id="GO:0006260">
    <property type="term" value="P:DNA replication"/>
    <property type="evidence" value="ECO:0007669"/>
    <property type="project" value="UniProtKB-UniRule"/>
</dbReference>
<dbReference type="GO" id="GO:0045892">
    <property type="term" value="P:negative regulation of DNA-templated transcription"/>
    <property type="evidence" value="ECO:0007669"/>
    <property type="project" value="UniProtKB-UniRule"/>
</dbReference>
<dbReference type="GO" id="GO:0006508">
    <property type="term" value="P:proteolysis"/>
    <property type="evidence" value="ECO:0007669"/>
    <property type="project" value="InterPro"/>
</dbReference>
<dbReference type="GO" id="GO:0009432">
    <property type="term" value="P:SOS response"/>
    <property type="evidence" value="ECO:0007669"/>
    <property type="project" value="UniProtKB-UniRule"/>
</dbReference>
<dbReference type="CDD" id="cd06529">
    <property type="entry name" value="S24_LexA-like"/>
    <property type="match status" value="1"/>
</dbReference>
<dbReference type="FunFam" id="1.10.10.10:FF:000102">
    <property type="entry name" value="LexA repressor"/>
    <property type="match status" value="1"/>
</dbReference>
<dbReference type="FunFam" id="2.10.109.10:FF:000001">
    <property type="entry name" value="LexA repressor"/>
    <property type="match status" value="1"/>
</dbReference>
<dbReference type="Gene3D" id="2.10.109.10">
    <property type="entry name" value="Umud Fragment, subunit A"/>
    <property type="match status" value="1"/>
</dbReference>
<dbReference type="Gene3D" id="1.10.10.10">
    <property type="entry name" value="Winged helix-like DNA-binding domain superfamily/Winged helix DNA-binding domain"/>
    <property type="match status" value="1"/>
</dbReference>
<dbReference type="HAMAP" id="MF_00015">
    <property type="entry name" value="LexA"/>
    <property type="match status" value="1"/>
</dbReference>
<dbReference type="InterPro" id="IPR006200">
    <property type="entry name" value="LexA"/>
</dbReference>
<dbReference type="InterPro" id="IPR039418">
    <property type="entry name" value="LexA-like"/>
</dbReference>
<dbReference type="InterPro" id="IPR036286">
    <property type="entry name" value="LexA/Signal_pep-like_sf"/>
</dbReference>
<dbReference type="InterPro" id="IPR006199">
    <property type="entry name" value="LexA_DNA-bd_dom"/>
</dbReference>
<dbReference type="InterPro" id="IPR050077">
    <property type="entry name" value="LexA_repressor"/>
</dbReference>
<dbReference type="InterPro" id="IPR006197">
    <property type="entry name" value="Peptidase_S24_LexA"/>
</dbReference>
<dbReference type="InterPro" id="IPR015927">
    <property type="entry name" value="Peptidase_S24_S26A/B/C"/>
</dbReference>
<dbReference type="InterPro" id="IPR036388">
    <property type="entry name" value="WH-like_DNA-bd_sf"/>
</dbReference>
<dbReference type="InterPro" id="IPR036390">
    <property type="entry name" value="WH_DNA-bd_sf"/>
</dbReference>
<dbReference type="NCBIfam" id="TIGR00498">
    <property type="entry name" value="lexA"/>
    <property type="match status" value="1"/>
</dbReference>
<dbReference type="PANTHER" id="PTHR33516">
    <property type="entry name" value="LEXA REPRESSOR"/>
    <property type="match status" value="1"/>
</dbReference>
<dbReference type="PANTHER" id="PTHR33516:SF2">
    <property type="entry name" value="LEXA REPRESSOR-RELATED"/>
    <property type="match status" value="1"/>
</dbReference>
<dbReference type="Pfam" id="PF01726">
    <property type="entry name" value="LexA_DNA_bind"/>
    <property type="match status" value="1"/>
</dbReference>
<dbReference type="Pfam" id="PF00717">
    <property type="entry name" value="Peptidase_S24"/>
    <property type="match status" value="1"/>
</dbReference>
<dbReference type="PRINTS" id="PR00726">
    <property type="entry name" value="LEXASERPTASE"/>
</dbReference>
<dbReference type="SUPFAM" id="SSF51306">
    <property type="entry name" value="LexA/Signal peptidase"/>
    <property type="match status" value="1"/>
</dbReference>
<dbReference type="SUPFAM" id="SSF46785">
    <property type="entry name" value="Winged helix' DNA-binding domain"/>
    <property type="match status" value="1"/>
</dbReference>
<gene>
    <name evidence="1" type="primary">lexA</name>
    <name type="ordered locus">BR1144</name>
    <name type="ordered locus">BS1330_I1140</name>
</gene>
<organism>
    <name type="scientific">Brucella suis biovar 1 (strain 1330)</name>
    <dbReference type="NCBI Taxonomy" id="204722"/>
    <lineage>
        <taxon>Bacteria</taxon>
        <taxon>Pseudomonadati</taxon>
        <taxon>Pseudomonadota</taxon>
        <taxon>Alphaproteobacteria</taxon>
        <taxon>Hyphomicrobiales</taxon>
        <taxon>Brucellaceae</taxon>
        <taxon>Brucella/Ochrobactrum group</taxon>
        <taxon>Brucella</taxon>
    </lineage>
</organism>
<name>LEXA_BRUSU</name>
<reference key="1">
    <citation type="journal article" date="2002" name="Proc. Natl. Acad. Sci. U.S.A.">
        <title>The Brucella suis genome reveals fundamental similarities between animal and plant pathogens and symbionts.</title>
        <authorList>
            <person name="Paulsen I.T."/>
            <person name="Seshadri R."/>
            <person name="Nelson K.E."/>
            <person name="Eisen J.A."/>
            <person name="Heidelberg J.F."/>
            <person name="Read T.D."/>
            <person name="Dodson R.J."/>
            <person name="Umayam L.A."/>
            <person name="Brinkac L.M."/>
            <person name="Beanan M.J."/>
            <person name="Daugherty S.C."/>
            <person name="DeBoy R.T."/>
            <person name="Durkin A.S."/>
            <person name="Kolonay J.F."/>
            <person name="Madupu R."/>
            <person name="Nelson W.C."/>
            <person name="Ayodeji B."/>
            <person name="Kraul M."/>
            <person name="Shetty J."/>
            <person name="Malek J.A."/>
            <person name="Van Aken S.E."/>
            <person name="Riedmuller S."/>
            <person name="Tettelin H."/>
            <person name="Gill S.R."/>
            <person name="White O."/>
            <person name="Salzberg S.L."/>
            <person name="Hoover D.L."/>
            <person name="Lindler L.E."/>
            <person name="Halling S.M."/>
            <person name="Boyle S.M."/>
            <person name="Fraser C.M."/>
        </authorList>
    </citation>
    <scope>NUCLEOTIDE SEQUENCE [LARGE SCALE GENOMIC DNA]</scope>
    <source>
        <strain>1330</strain>
    </source>
</reference>
<reference key="2">
    <citation type="journal article" date="2011" name="J. Bacteriol.">
        <title>Revised genome sequence of Brucella suis 1330.</title>
        <authorList>
            <person name="Tae H."/>
            <person name="Shallom S."/>
            <person name="Settlage R."/>
            <person name="Preston D."/>
            <person name="Adams L.G."/>
            <person name="Garner H.R."/>
        </authorList>
    </citation>
    <scope>NUCLEOTIDE SEQUENCE [LARGE SCALE GENOMIC DNA]</scope>
    <source>
        <strain>1330</strain>
    </source>
</reference>
<accession>Q8G0F1</accession>
<accession>G0KA66</accession>
<sequence>MLTRKQHELLLFIHERLKETGIPPSFDEMKEALDLASKSGIHRLITALEERGFIRRLPNRARALEVLRLPDSIAPGLSPQKKFAPSVIEGSLGKVASVQPVRPAPAPQNSEAPATVSVPVMGRIAAGVPISAIQNQTHMLSLPPEMIGAGEHYALEVKGDSMIDAGIFDGDTVIIKRGDTANPGEIVVALVDEEEATLKRFRREGASIALEAANPAYETRIFGPDRVHVQGKLVGLIRRY</sequence>
<protein>
    <recommendedName>
        <fullName evidence="1">LexA repressor</fullName>
        <ecNumber evidence="1">3.4.21.88</ecNumber>
    </recommendedName>
</protein>
<keyword id="KW-0068">Autocatalytic cleavage</keyword>
<keyword id="KW-0227">DNA damage</keyword>
<keyword id="KW-0234">DNA repair</keyword>
<keyword id="KW-0235">DNA replication</keyword>
<keyword id="KW-0238">DNA-binding</keyword>
<keyword id="KW-0378">Hydrolase</keyword>
<keyword id="KW-0678">Repressor</keyword>
<keyword id="KW-0742">SOS response</keyword>
<keyword id="KW-0804">Transcription</keyword>
<keyword id="KW-0805">Transcription regulation</keyword>